<gene>
    <name type="primary">SB09</name>
</gene>
<dbReference type="EMBL" id="AF051206">
    <property type="protein sequence ID" value="AAC32111.1"/>
    <property type="molecule type" value="mRNA"/>
</dbReference>
<dbReference type="PIR" id="T50866">
    <property type="entry name" value="T50866"/>
</dbReference>
<dbReference type="SMR" id="O65049"/>
<dbReference type="GO" id="GO:0005737">
    <property type="term" value="C:cytoplasm"/>
    <property type="evidence" value="ECO:0007669"/>
    <property type="project" value="UniProtKB-SubCell"/>
</dbReference>
<dbReference type="CDD" id="cd02947">
    <property type="entry name" value="TRX_family"/>
    <property type="match status" value="1"/>
</dbReference>
<dbReference type="FunFam" id="3.40.30.10:FF:000104">
    <property type="entry name" value="Thioredoxin"/>
    <property type="match status" value="1"/>
</dbReference>
<dbReference type="Gene3D" id="3.40.30.10">
    <property type="entry name" value="Glutaredoxin"/>
    <property type="match status" value="1"/>
</dbReference>
<dbReference type="InterPro" id="IPR036249">
    <property type="entry name" value="Thioredoxin-like_sf"/>
</dbReference>
<dbReference type="InterPro" id="IPR013766">
    <property type="entry name" value="Thioredoxin_domain"/>
</dbReference>
<dbReference type="InterPro" id="IPR050620">
    <property type="entry name" value="Thioredoxin_H-type-like"/>
</dbReference>
<dbReference type="PANTHER" id="PTHR10438">
    <property type="entry name" value="THIOREDOXIN"/>
    <property type="match status" value="1"/>
</dbReference>
<dbReference type="PANTHER" id="PTHR10438:SF425">
    <property type="entry name" value="THIOREDOXIN H1"/>
    <property type="match status" value="1"/>
</dbReference>
<dbReference type="Pfam" id="PF00085">
    <property type="entry name" value="Thioredoxin"/>
    <property type="match status" value="1"/>
</dbReference>
<dbReference type="PRINTS" id="PR00421">
    <property type="entry name" value="THIOREDOXIN"/>
</dbReference>
<dbReference type="SUPFAM" id="SSF52833">
    <property type="entry name" value="Thioredoxin-like"/>
    <property type="match status" value="1"/>
</dbReference>
<dbReference type="PROSITE" id="PS51352">
    <property type="entry name" value="THIOREDOXIN_2"/>
    <property type="match status" value="1"/>
</dbReference>
<reference key="1">
    <citation type="journal article" date="1998" name="Genetics">
        <title>Sequence-tagged-site (STS) markers of arbitrary genes: development, characterization and analysis of linkage in black spruce.</title>
        <authorList>
            <person name="Perry D.J."/>
            <person name="Bousquet J."/>
        </authorList>
    </citation>
    <scope>NUCLEOTIDE SEQUENCE [MRNA]</scope>
</reference>
<proteinExistence type="evidence at transcript level"/>
<evidence type="ECO:0000250" key="1"/>
<evidence type="ECO:0000255" key="2">
    <source>
        <dbReference type="PROSITE-ProRule" id="PRU00691"/>
    </source>
</evidence>
<evidence type="ECO:0000305" key="3"/>
<comment type="function">
    <text evidence="1">Participates in various redox reactions through the reversible oxidation of the active center dithiol to a disulfide. The H form is known to activate a number of cytosolic enzymes (By similarity).</text>
</comment>
<comment type="subcellular location">
    <subcellularLocation>
        <location evidence="1">Cytoplasm</location>
    </subcellularLocation>
</comment>
<comment type="similarity">
    <text evidence="3">Belongs to the thioredoxin family. Plant H-type subfamily.</text>
</comment>
<accession>O65049</accession>
<sequence>MAEGNVFACHSTEGWRSKLQEAIDTKRLVAVDFTATWCGPCRVIGPVFVELSKKFPEIFFLKVDVDELRDVAQEWDVEAMPTFIFIKDGKAVDKVVGAKKDDLERKVAALAAAATTTEATLPAQA</sequence>
<organism>
    <name type="scientific">Picea mariana</name>
    <name type="common">Black spruce</name>
    <name type="synonym">Abies mariana</name>
    <dbReference type="NCBI Taxonomy" id="3335"/>
    <lineage>
        <taxon>Eukaryota</taxon>
        <taxon>Viridiplantae</taxon>
        <taxon>Streptophyta</taxon>
        <taxon>Embryophyta</taxon>
        <taxon>Tracheophyta</taxon>
        <taxon>Spermatophyta</taxon>
        <taxon>Pinopsida</taxon>
        <taxon>Pinidae</taxon>
        <taxon>Conifers I</taxon>
        <taxon>Pinales</taxon>
        <taxon>Pinaceae</taxon>
        <taxon>Picea</taxon>
    </lineage>
</organism>
<protein>
    <recommendedName>
        <fullName>Thioredoxin H-type</fullName>
        <shortName>Trx-H</shortName>
    </recommendedName>
</protein>
<name>TRXH_PICMA</name>
<keyword id="KW-0963">Cytoplasm</keyword>
<keyword id="KW-1015">Disulfide bond</keyword>
<keyword id="KW-0249">Electron transport</keyword>
<keyword id="KW-0676">Redox-active center</keyword>
<keyword id="KW-0813">Transport</keyword>
<feature type="chain" id="PRO_0000120058" description="Thioredoxin H-type">
    <location>
        <begin position="1"/>
        <end position="125"/>
    </location>
</feature>
<feature type="domain" description="Thioredoxin" evidence="2">
    <location>
        <begin position="2"/>
        <end position="112"/>
    </location>
</feature>
<feature type="active site" description="Nucleophile" evidence="1">
    <location>
        <position position="38"/>
    </location>
</feature>
<feature type="active site" description="Nucleophile" evidence="1">
    <location>
        <position position="41"/>
    </location>
</feature>
<feature type="site" description="Deprotonates C-terminal active site Cys" evidence="1">
    <location>
        <position position="32"/>
    </location>
</feature>
<feature type="site" description="Contributes to redox potential value" evidence="1">
    <location>
        <position position="39"/>
    </location>
</feature>
<feature type="site" description="Contributes to redox potential value" evidence="1">
    <location>
        <position position="40"/>
    </location>
</feature>
<feature type="disulfide bond" description="Redox-active" evidence="2">
    <location>
        <begin position="38"/>
        <end position="41"/>
    </location>
</feature>